<sequence>MEEFLQRAKSKLDRSKQLEQVHAVIGPKSCDLDSLISAFTYAYFLDKVSPPGVLCLPVLNIPRTEFNYFTETRFILEELNIPESFHIFRDEINLHQLNDEGKLSITLVGSHVLGSEDRTLESAVVRVINPGEQSDGELGFPETSSSLVLKELLREAPELITQQLAHLLRGSILFTWMSMDPELPEKQEEILSILEEQFPNLPPRDDIINVLQESQLSAQGLSLEQTMLKDLKELSDGEIKVAISTVNMTLEDYLLHGNITSDLKAFTDKFGFDVLILISSFTWEEQQRQQIAVYSQNLELCSQICCELEESQNPCLELEPFECGCDEILVYQQEDPSVTSDQVFLLLKEVINRRCAEMVSNSRTSSTEAVAGSAPLSQGSSGIMELYGSDIEPQPSSVNFIENPPELNDSNQAQADGNIDLVSPDSGLATIRSSRSSKESSVFLSDDSPVGDGGAPHHSLLPGFDSYSPIPEGIVAEEHAHSGEHSEHFDLFNFDSAPIASEQSQPSSHSADYSPEDDFPNSDSSEGNLSAGPKGLGEMGINMSNYSSSSLLSEAGKDSLVEFDEEFIQRQESSGDNSERNLSLTCFAGEEPSSPERLKNPGKMIPPTPMNSFVEISPSNEEPTPLYPEDIIQNAIDTGHLGPPQARARCRSWWGGLEIDSKNVVDTWNASEQESVFQSPEPWKDPKPEPVERRTSDSTFQPKSLEFSKSDPWESEFGQPELGNKEAQDQKEESLQYQHLPTVRPHLTDASPHGTNHLIEDFAALWHSGHSPTTMPEPWGNPTDAGEAAVTMSFPTWGAFDKEEDNADTLKNTWNLHPTNNETPSGQEPSEWAMGQSGFSFPAADLLDNPLIEVNKDAAPEIWGKNNSSKDTSLTSGSPTSDLGQTWNNSKLPGEDQNGLVDPKATGKVYEKEGSWSLFEESAKKRGADVLAPWEDSFLSYKCSDYSASNIGEDSVPSPLDTNYSTSDSYTSPTYAGDEKEIANKPVDKDNGFEAKDAEFPAEGLEVLATSSQQSQRNRIGSGPGNLDMWALPHTEDKPEGNDAHHPDSDALKTEHAEDKNASMEDDVRESSPSSYDDPSMMRLYEANRQLTLLHSNTNSRQAAPDSLDTWNRVTLEDTQSTATISDMDNDLDWDDCSGGVAISGDGQAEGYIAANSEPETRFSVKQLEPWGTEHQEANQVDWDLSASAEPTGDPGPSEYQTLNEKTGQLIANSIWDSVMGDKNMPSFRLPSPPNTVDMEHGTWPSESPRHSNGKDSHMLEASRLSESGGLTSQPVNQDTWGDSQGDTASSVTGLASPEHFAQSDPWTGHTYGQSESEIEGLVASDCEHLDKEAALGSGVNGAPWAFGKKPRDQEFSSSDAFEHQDISSASGKISSLSVTSSPQSEEPGEALEVEKEPFILDSLAVQTETFTWDLQSKDTHEESLVDHRNLGEANTTLDRINPMKNRPLSGMELEKTEACTILKPERANGKLLYESSQDFGVWDGPMDSDVWDSHISYETAMNSTGQRTEERSLEALSPGNYDRDSLSSGCTHSSASSPDLHDSSVALSSWTYGPSAEHQKENHDDANKQIHQESELFTTEAHVDVITEMKDFVENREDGFGKMSNQEDPQFPEIPNDPFNSGPSSSSSSLGADKYSEYSHAYQEGDLTTKRQEENELGFLEIVEPEGTRIISTSSGSGNDSGGDEELLEKELHLATVAQSEAGACTSLHEPAFSATEHSKPEFSVFVGSLESIEKENKSSPFSDSQQSSPGQWILSPLMQADTQDTCKEETRAAETGTMDTTWHGSASTEAKNGDPDKLEMLGFSADSTEWWNAGAQEGRANAGMSAEELSNSEGELEPTSPVFQNAGPWSLPIQNDSEPVDTGSTNPFRGKLKSPVLDSHGDKSQEKLWNIQPKQLDSDANQLSQLVILDQMKDKDSGQQTAMSPAAGDLPAETLTQGQGRESMLSVWDRAEPALTHRDENGCVSTGVSPTECQQENQWEPEKPYLSHVTHSSTPTENALESNAPTQLMRKLDSDWNSPSPSEPQHNFVPDILHGNFEEGGQLASASPDLWMDVKQPFSFKVDSENPDILTHCDHDSNSQASSSPDVCHDSEGEQKMEKHTAVYLGLEVEPSEFSLTEPNMNDEPTWEPEQESLPHNSELHSEHAMPLPPIDSQNDINNSSKPASSRSSPEPSDMRGDNNTSVTSMEEDTNPEVEAVDSVTIPGHFPRSEDADTFEAHQEVSVEVDDSWVSKDLCPESQTGTRALLDCEQPFASESPAVLTDIFLTSDTCLDVSEAALDHSFSDASGLNTSTGTIDDMSKLTLSEGHPETPVDGDAGKQDVCSSEASWGDFEYDAMGQNIDEELMREPEHFLYGGDLPSEESALKQSLTPYTPPFDLSYLTEPTGCTETAQGAESPGDESLGSDAAEMLLSALPDHREEDKAETNIRKPRYQMTVLHIHEDPEALSSPVGGTGSNNESSPSNIDWEIETDNSDSPAGGDMKPPNGKEILELEEDEKVIPTKGPKQTELEYKEEKQPEQSEDHQVLAVDYILVSHEKDSPLKPEAREARENIPELEQLSIGSRETGLPETQLSGTPDTCQSEFLNDVKVHSAERMSSSSNHESASLENPAQDQSWMVLSHSEVGDPPTETRDSGPESPGRTPEPFLSLSLDKGPKSQVLERNKPLNSLALEEVAGLSSQSRNIERQGQAGLDAVPTQAATHDNEWEMLSPQLSRKNRNPPQEMEEETQCPEPGPRKPRLKGPPSEDEGMDIHFEEGVLSPSAADMRPEPPNSLDLNGSHPRRIKLTAPNINLSLDQSEGSILSDDNLDSPDEIDINVDELDTPDEADSFEYTNHEDPTANKSSGQESESIPEYTAEEEREDNRLWRTVVIGEQEQRIDMKVIEPYRRVISHGGYYGDGLNAIIVFAACFLPDSSRADYHYVMENLFLYVISTLELMVAEDYMIVYLNGATPRRKMPGLGWMKKCYQMIDRRLRKNLKSFIIVHPSWFIRTILAVTRPFISSKFSSKIKYVTSLSELSGLIPMDCIHIPESIIKYDEEKSFKRSVRLDEELREASEAAKTSCLYNDPEMSSMEKDIDMKLKEKP</sequence>
<accession>Q52KR3</accession>
<accession>Q501M3</accession>
<accession>Q6A079</accession>
<accession>Q8BW65</accession>
<accession>Q8BYM6</accession>
<accession>Q9D217</accession>
<dbReference type="EMBL" id="AK172939">
    <property type="protein sequence ID" value="BAD32217.1"/>
    <property type="status" value="ALT_INIT"/>
    <property type="molecule type" value="mRNA"/>
</dbReference>
<dbReference type="EMBL" id="AK020727">
    <property type="protein sequence ID" value="BAB32192.1"/>
    <property type="molecule type" value="mRNA"/>
</dbReference>
<dbReference type="EMBL" id="AK038997">
    <property type="protein sequence ID" value="BAC30198.1"/>
    <property type="molecule type" value="mRNA"/>
</dbReference>
<dbReference type="EMBL" id="AK054190">
    <property type="protein sequence ID" value="BAC35688.1"/>
    <property type="molecule type" value="mRNA"/>
</dbReference>
<dbReference type="EMBL" id="AK165582">
    <property type="protein sequence ID" value="BAE38273.1"/>
    <property type="molecule type" value="mRNA"/>
</dbReference>
<dbReference type="EMBL" id="AK170001">
    <property type="protein sequence ID" value="BAE41506.1"/>
    <property type="status" value="ALT_INIT"/>
    <property type="molecule type" value="mRNA"/>
</dbReference>
<dbReference type="EMBL" id="AC126674">
    <property type="status" value="NOT_ANNOTATED_CDS"/>
    <property type="molecule type" value="Genomic_DNA"/>
</dbReference>
<dbReference type="EMBL" id="AC128703">
    <property type="status" value="NOT_ANNOTATED_CDS"/>
    <property type="molecule type" value="Genomic_DNA"/>
</dbReference>
<dbReference type="EMBL" id="AC147026">
    <property type="status" value="NOT_ANNOTATED_CDS"/>
    <property type="molecule type" value="Genomic_DNA"/>
</dbReference>
<dbReference type="EMBL" id="BC094224">
    <property type="protein sequence ID" value="AAH94224.1"/>
    <property type="status" value="ALT_INIT"/>
    <property type="molecule type" value="mRNA"/>
</dbReference>
<dbReference type="EMBL" id="BC095978">
    <property type="protein sequence ID" value="AAH95978.1"/>
    <property type="molecule type" value="mRNA"/>
</dbReference>
<dbReference type="CCDS" id="CCDS50400.1">
    <molecule id="Q52KR3-1"/>
</dbReference>
<dbReference type="RefSeq" id="NP_851993.3">
    <molecule id="Q52KR3-1"/>
    <property type="nucleotide sequence ID" value="NM_181348.4"/>
</dbReference>
<dbReference type="RefSeq" id="XP_006527217.1">
    <molecule id="Q52KR3-6"/>
    <property type="nucleotide sequence ID" value="XM_006527154.4"/>
</dbReference>
<dbReference type="SMR" id="Q52KR3"/>
<dbReference type="BioGRID" id="237273">
    <property type="interactions" value="10"/>
</dbReference>
<dbReference type="FunCoup" id="Q52KR3">
    <property type="interactions" value="1816"/>
</dbReference>
<dbReference type="IntAct" id="Q52KR3">
    <property type="interactions" value="1"/>
</dbReference>
<dbReference type="STRING" id="10090.ENSMUSP00000084977"/>
<dbReference type="GlyGen" id="Q52KR3">
    <property type="glycosylation" value="1 site"/>
</dbReference>
<dbReference type="iPTMnet" id="Q52KR3"/>
<dbReference type="PhosphoSitePlus" id="Q52KR3"/>
<dbReference type="jPOST" id="Q52KR3"/>
<dbReference type="PaxDb" id="10090-ENSMUSP00000084977"/>
<dbReference type="PeptideAtlas" id="Q52KR3"/>
<dbReference type="ProteomicsDB" id="291683">
    <molecule id="Q52KR3-1"/>
</dbReference>
<dbReference type="ProteomicsDB" id="291684">
    <molecule id="Q52KR3-2"/>
</dbReference>
<dbReference type="ProteomicsDB" id="291685">
    <molecule id="Q52KR3-3"/>
</dbReference>
<dbReference type="ProteomicsDB" id="291686">
    <molecule id="Q52KR3-4"/>
</dbReference>
<dbReference type="ProteomicsDB" id="291687">
    <molecule id="Q52KR3-5"/>
</dbReference>
<dbReference type="ProteomicsDB" id="291688">
    <molecule id="Q52KR3-6"/>
</dbReference>
<dbReference type="Pumba" id="Q52KR3"/>
<dbReference type="Antibodypedia" id="27288">
    <property type="antibodies" value="108 antibodies from 27 providers"/>
</dbReference>
<dbReference type="Ensembl" id="ENSMUST00000087689.5">
    <molecule id="Q52KR3-1"/>
    <property type="protein sequence ID" value="ENSMUSP00000084977.5"/>
    <property type="gene ID" value="ENSMUSG00000039126.11"/>
</dbReference>
<dbReference type="Ensembl" id="ENSMUST00000223920.2">
    <molecule id="Q52KR3-4"/>
    <property type="protein sequence ID" value="ENSMUSP00000153418.2"/>
    <property type="gene ID" value="ENSMUSG00000039126.11"/>
</dbReference>
<dbReference type="Ensembl" id="ENSMUST00000225351.2">
    <molecule id="Q52KR3-3"/>
    <property type="protein sequence ID" value="ENSMUSP00000153135.2"/>
    <property type="gene ID" value="ENSMUSG00000039126.11"/>
</dbReference>
<dbReference type="GeneID" id="353211"/>
<dbReference type="KEGG" id="mmu:353211"/>
<dbReference type="UCSC" id="uc008gxf.2">
    <molecule id="Q52KR3-4"/>
    <property type="organism name" value="mouse"/>
</dbReference>
<dbReference type="UCSC" id="uc008gxg.2">
    <molecule id="Q52KR3-1"/>
    <property type="organism name" value="mouse"/>
</dbReference>
<dbReference type="AGR" id="MGI:1925004"/>
<dbReference type="CTD" id="158471"/>
<dbReference type="MGI" id="MGI:1925004">
    <property type="gene designation" value="Prune2"/>
</dbReference>
<dbReference type="VEuPathDB" id="HostDB:ENSMUSG00000039126"/>
<dbReference type="eggNOG" id="KOG4129">
    <property type="taxonomic scope" value="Eukaryota"/>
</dbReference>
<dbReference type="GeneTree" id="ENSGT00940000154422"/>
<dbReference type="HOGENOM" id="CLU_227259_0_0_1"/>
<dbReference type="InParanoid" id="Q52KR3"/>
<dbReference type="OMA" id="WMDAKQP"/>
<dbReference type="OrthoDB" id="19923at2759"/>
<dbReference type="PhylomeDB" id="Q52KR3"/>
<dbReference type="TreeFam" id="TF323914"/>
<dbReference type="BioGRID-ORCS" id="353211">
    <property type="hits" value="0 hits in 78 CRISPR screens"/>
</dbReference>
<dbReference type="ChiTaRS" id="Prune2">
    <property type="organism name" value="mouse"/>
</dbReference>
<dbReference type="PRO" id="PR:Q52KR3"/>
<dbReference type="Proteomes" id="UP000000589">
    <property type="component" value="Chromosome 19"/>
</dbReference>
<dbReference type="RNAct" id="Q52KR3">
    <property type="molecule type" value="protein"/>
</dbReference>
<dbReference type="Bgee" id="ENSMUSG00000039126">
    <property type="expression patterns" value="Expressed in facial nucleus and 188 other cell types or tissues"/>
</dbReference>
<dbReference type="ExpressionAtlas" id="Q52KR3">
    <property type="expression patterns" value="baseline and differential"/>
</dbReference>
<dbReference type="GO" id="GO:0005829">
    <property type="term" value="C:cytosol"/>
    <property type="evidence" value="ECO:0007669"/>
    <property type="project" value="Ensembl"/>
</dbReference>
<dbReference type="GO" id="GO:0098978">
    <property type="term" value="C:glutamatergic synapse"/>
    <property type="evidence" value="ECO:0000314"/>
    <property type="project" value="SynGO"/>
</dbReference>
<dbReference type="GO" id="GO:0098793">
    <property type="term" value="C:presynapse"/>
    <property type="evidence" value="ECO:0000314"/>
    <property type="project" value="SynGO"/>
</dbReference>
<dbReference type="GO" id="GO:0016462">
    <property type="term" value="F:pyrophosphatase activity"/>
    <property type="evidence" value="ECO:0007669"/>
    <property type="project" value="InterPro"/>
</dbReference>
<dbReference type="GO" id="GO:0006915">
    <property type="term" value="P:apoptotic process"/>
    <property type="evidence" value="ECO:0007669"/>
    <property type="project" value="UniProtKB-KW"/>
</dbReference>
<dbReference type="CDD" id="cd00170">
    <property type="entry name" value="SEC14"/>
    <property type="match status" value="1"/>
</dbReference>
<dbReference type="FunFam" id="3.40.525.10:FF:000001">
    <property type="entry name" value="BCL2/adenovirus E1B protein-interacting protein 2"/>
    <property type="match status" value="1"/>
</dbReference>
<dbReference type="FunFam" id="3.10.310.20:FF:000002">
    <property type="entry name" value="Prune homolog 2 with BCH domain"/>
    <property type="match status" value="1"/>
</dbReference>
<dbReference type="FunFam" id="3.90.1640.10:FF:000003">
    <property type="entry name" value="Prune homolog 2 with BCH domain"/>
    <property type="match status" value="1"/>
</dbReference>
<dbReference type="Gene3D" id="3.40.525.10">
    <property type="entry name" value="CRAL-TRIO lipid binding domain"/>
    <property type="match status" value="1"/>
</dbReference>
<dbReference type="Gene3D" id="3.10.310.20">
    <property type="entry name" value="DHHA2 domain"/>
    <property type="match status" value="1"/>
</dbReference>
<dbReference type="Gene3D" id="3.90.1640.10">
    <property type="entry name" value="inorganic pyrophosphatase (n-terminal core)"/>
    <property type="match status" value="1"/>
</dbReference>
<dbReference type="InterPro" id="IPR022181">
    <property type="entry name" value="Bcl2-/adenovirus-E1B"/>
</dbReference>
<dbReference type="InterPro" id="IPR001251">
    <property type="entry name" value="CRAL-TRIO_dom"/>
</dbReference>
<dbReference type="InterPro" id="IPR036865">
    <property type="entry name" value="CRAL-TRIO_dom_sf"/>
</dbReference>
<dbReference type="InterPro" id="IPR038763">
    <property type="entry name" value="DHH_sf"/>
</dbReference>
<dbReference type="InterPro" id="IPR004097">
    <property type="entry name" value="DHHA2"/>
</dbReference>
<dbReference type="InterPro" id="IPR038222">
    <property type="entry name" value="DHHA2_dom_sf"/>
</dbReference>
<dbReference type="PANTHER" id="PTHR12112">
    <property type="entry name" value="BNIP - RELATED"/>
    <property type="match status" value="1"/>
</dbReference>
<dbReference type="PANTHER" id="PTHR12112:SF11">
    <property type="entry name" value="PROTEIN PRUNE HOMOLOG 2"/>
    <property type="match status" value="1"/>
</dbReference>
<dbReference type="Pfam" id="PF12496">
    <property type="entry name" value="BNIP2"/>
    <property type="match status" value="1"/>
</dbReference>
<dbReference type="Pfam" id="PF13716">
    <property type="entry name" value="CRAL_TRIO_2"/>
    <property type="match status" value="1"/>
</dbReference>
<dbReference type="Pfam" id="PF02833">
    <property type="entry name" value="DHHA2"/>
    <property type="match status" value="1"/>
</dbReference>
<dbReference type="SMART" id="SM01131">
    <property type="entry name" value="DHHA2"/>
    <property type="match status" value="1"/>
</dbReference>
<dbReference type="SMART" id="SM00516">
    <property type="entry name" value="SEC14"/>
    <property type="match status" value="1"/>
</dbReference>
<dbReference type="SUPFAM" id="SSF52087">
    <property type="entry name" value="CRAL/TRIO domain"/>
    <property type="match status" value="1"/>
</dbReference>
<dbReference type="SUPFAM" id="SSF64182">
    <property type="entry name" value="DHH phosphoesterases"/>
    <property type="match status" value="1"/>
</dbReference>
<dbReference type="PROSITE" id="PS50191">
    <property type="entry name" value="CRAL_TRIO"/>
    <property type="match status" value="1"/>
</dbReference>
<organism>
    <name type="scientific">Mus musculus</name>
    <name type="common">Mouse</name>
    <dbReference type="NCBI Taxonomy" id="10090"/>
    <lineage>
        <taxon>Eukaryota</taxon>
        <taxon>Metazoa</taxon>
        <taxon>Chordata</taxon>
        <taxon>Craniata</taxon>
        <taxon>Vertebrata</taxon>
        <taxon>Euteleostomi</taxon>
        <taxon>Mammalia</taxon>
        <taxon>Eutheria</taxon>
        <taxon>Euarchontoglires</taxon>
        <taxon>Glires</taxon>
        <taxon>Rodentia</taxon>
        <taxon>Myomorpha</taxon>
        <taxon>Muroidea</taxon>
        <taxon>Muridae</taxon>
        <taxon>Murinae</taxon>
        <taxon>Mus</taxon>
        <taxon>Mus</taxon>
    </lineage>
</organism>
<evidence type="ECO:0000250" key="1"/>
<evidence type="ECO:0000250" key="2">
    <source>
        <dbReference type="UniProtKB" id="Q8WUY3"/>
    </source>
</evidence>
<evidence type="ECO:0000255" key="3">
    <source>
        <dbReference type="PROSITE-ProRule" id="PRU00056"/>
    </source>
</evidence>
<evidence type="ECO:0000256" key="4">
    <source>
        <dbReference type="SAM" id="MobiDB-lite"/>
    </source>
</evidence>
<evidence type="ECO:0000269" key="5">
    <source>
    </source>
</evidence>
<evidence type="ECO:0000303" key="6">
    <source>
    </source>
</evidence>
<evidence type="ECO:0000303" key="7">
    <source>
    </source>
</evidence>
<evidence type="ECO:0000303" key="8">
    <source>
    </source>
</evidence>
<evidence type="ECO:0000305" key="9"/>
<protein>
    <recommendedName>
        <fullName>Protein prune homolog 2</fullName>
    </recommendedName>
    <alternativeName>
        <fullName>BNIP2 motif-containing molecule at the C-terminal region 1</fullName>
    </alternativeName>
</protein>
<proteinExistence type="evidence at protein level"/>
<gene>
    <name type="primary">Prune2</name>
    <name type="synonym">Bmcc1</name>
    <name type="synonym">Kiaa0367</name>
</gene>
<name>PRUN2_MOUSE</name>
<reference key="1">
    <citation type="journal article" date="2004" name="DNA Res.">
        <title>Prediction of the coding sequences of mouse homologues of KIAA gene: IV. The complete nucleotide sequences of 500 mouse KIAA-homologous cDNAs identified by screening of terminal sequences of cDNA clones randomly sampled from size-fractionated libraries.</title>
        <authorList>
            <person name="Okazaki N."/>
            <person name="Kikuno R."/>
            <person name="Ohara R."/>
            <person name="Inamoto S."/>
            <person name="Koseki H."/>
            <person name="Hiraoka S."/>
            <person name="Saga Y."/>
            <person name="Seino S."/>
            <person name="Nishimura M."/>
            <person name="Kaisho T."/>
            <person name="Hoshino K."/>
            <person name="Kitamura H."/>
            <person name="Nagase T."/>
            <person name="Ohara O."/>
            <person name="Koga H."/>
        </authorList>
    </citation>
    <scope>NUCLEOTIDE SEQUENCE [LARGE SCALE MRNA] (ISOFORM 2)</scope>
    <source>
        <tissue>Fetal brain</tissue>
    </source>
</reference>
<reference key="2">
    <citation type="journal article" date="2005" name="Science">
        <title>The transcriptional landscape of the mammalian genome.</title>
        <authorList>
            <person name="Carninci P."/>
            <person name="Kasukawa T."/>
            <person name="Katayama S."/>
            <person name="Gough J."/>
            <person name="Frith M.C."/>
            <person name="Maeda N."/>
            <person name="Oyama R."/>
            <person name="Ravasi T."/>
            <person name="Lenhard B."/>
            <person name="Wells C."/>
            <person name="Kodzius R."/>
            <person name="Shimokawa K."/>
            <person name="Bajic V.B."/>
            <person name="Brenner S.E."/>
            <person name="Batalov S."/>
            <person name="Forrest A.R."/>
            <person name="Zavolan M."/>
            <person name="Davis M.J."/>
            <person name="Wilming L.G."/>
            <person name="Aidinis V."/>
            <person name="Allen J.E."/>
            <person name="Ambesi-Impiombato A."/>
            <person name="Apweiler R."/>
            <person name="Aturaliya R.N."/>
            <person name="Bailey T.L."/>
            <person name="Bansal M."/>
            <person name="Baxter L."/>
            <person name="Beisel K.W."/>
            <person name="Bersano T."/>
            <person name="Bono H."/>
            <person name="Chalk A.M."/>
            <person name="Chiu K.P."/>
            <person name="Choudhary V."/>
            <person name="Christoffels A."/>
            <person name="Clutterbuck D.R."/>
            <person name="Crowe M.L."/>
            <person name="Dalla E."/>
            <person name="Dalrymple B.P."/>
            <person name="de Bono B."/>
            <person name="Della Gatta G."/>
            <person name="di Bernardo D."/>
            <person name="Down T."/>
            <person name="Engstrom P."/>
            <person name="Fagiolini M."/>
            <person name="Faulkner G."/>
            <person name="Fletcher C.F."/>
            <person name="Fukushima T."/>
            <person name="Furuno M."/>
            <person name="Futaki S."/>
            <person name="Gariboldi M."/>
            <person name="Georgii-Hemming P."/>
            <person name="Gingeras T.R."/>
            <person name="Gojobori T."/>
            <person name="Green R.E."/>
            <person name="Gustincich S."/>
            <person name="Harbers M."/>
            <person name="Hayashi Y."/>
            <person name="Hensch T.K."/>
            <person name="Hirokawa N."/>
            <person name="Hill D."/>
            <person name="Huminiecki L."/>
            <person name="Iacono M."/>
            <person name="Ikeo K."/>
            <person name="Iwama A."/>
            <person name="Ishikawa T."/>
            <person name="Jakt M."/>
            <person name="Kanapin A."/>
            <person name="Katoh M."/>
            <person name="Kawasawa Y."/>
            <person name="Kelso J."/>
            <person name="Kitamura H."/>
            <person name="Kitano H."/>
            <person name="Kollias G."/>
            <person name="Krishnan S.P."/>
            <person name="Kruger A."/>
            <person name="Kummerfeld S.K."/>
            <person name="Kurochkin I.V."/>
            <person name="Lareau L.F."/>
            <person name="Lazarevic D."/>
            <person name="Lipovich L."/>
            <person name="Liu J."/>
            <person name="Liuni S."/>
            <person name="McWilliam S."/>
            <person name="Madan Babu M."/>
            <person name="Madera M."/>
            <person name="Marchionni L."/>
            <person name="Matsuda H."/>
            <person name="Matsuzawa S."/>
            <person name="Miki H."/>
            <person name="Mignone F."/>
            <person name="Miyake S."/>
            <person name="Morris K."/>
            <person name="Mottagui-Tabar S."/>
            <person name="Mulder N."/>
            <person name="Nakano N."/>
            <person name="Nakauchi H."/>
            <person name="Ng P."/>
            <person name="Nilsson R."/>
            <person name="Nishiguchi S."/>
            <person name="Nishikawa S."/>
            <person name="Nori F."/>
            <person name="Ohara O."/>
            <person name="Okazaki Y."/>
            <person name="Orlando V."/>
            <person name="Pang K.C."/>
            <person name="Pavan W.J."/>
            <person name="Pavesi G."/>
            <person name="Pesole G."/>
            <person name="Petrovsky N."/>
            <person name="Piazza S."/>
            <person name="Reed J."/>
            <person name="Reid J.F."/>
            <person name="Ring B.Z."/>
            <person name="Ringwald M."/>
            <person name="Rost B."/>
            <person name="Ruan Y."/>
            <person name="Salzberg S.L."/>
            <person name="Sandelin A."/>
            <person name="Schneider C."/>
            <person name="Schoenbach C."/>
            <person name="Sekiguchi K."/>
            <person name="Semple C.A."/>
            <person name="Seno S."/>
            <person name="Sessa L."/>
            <person name="Sheng Y."/>
            <person name="Shibata Y."/>
            <person name="Shimada H."/>
            <person name="Shimada K."/>
            <person name="Silva D."/>
            <person name="Sinclair B."/>
            <person name="Sperling S."/>
            <person name="Stupka E."/>
            <person name="Sugiura K."/>
            <person name="Sultana R."/>
            <person name="Takenaka Y."/>
            <person name="Taki K."/>
            <person name="Tammoja K."/>
            <person name="Tan S.L."/>
            <person name="Tang S."/>
            <person name="Taylor M.S."/>
            <person name="Tegner J."/>
            <person name="Teichmann S.A."/>
            <person name="Ueda H.R."/>
            <person name="van Nimwegen E."/>
            <person name="Verardo R."/>
            <person name="Wei C.L."/>
            <person name="Yagi K."/>
            <person name="Yamanishi H."/>
            <person name="Zabarovsky E."/>
            <person name="Zhu S."/>
            <person name="Zimmer A."/>
            <person name="Hide W."/>
            <person name="Bult C."/>
            <person name="Grimmond S.M."/>
            <person name="Teasdale R.D."/>
            <person name="Liu E.T."/>
            <person name="Brusic V."/>
            <person name="Quackenbush J."/>
            <person name="Wahlestedt C."/>
            <person name="Mattick J.S."/>
            <person name="Hume D.A."/>
            <person name="Kai C."/>
            <person name="Sasaki D."/>
            <person name="Tomaru Y."/>
            <person name="Fukuda S."/>
            <person name="Kanamori-Katayama M."/>
            <person name="Suzuki M."/>
            <person name="Aoki J."/>
            <person name="Arakawa T."/>
            <person name="Iida J."/>
            <person name="Imamura K."/>
            <person name="Itoh M."/>
            <person name="Kato T."/>
            <person name="Kawaji H."/>
            <person name="Kawagashira N."/>
            <person name="Kawashima T."/>
            <person name="Kojima M."/>
            <person name="Kondo S."/>
            <person name="Konno H."/>
            <person name="Nakano K."/>
            <person name="Ninomiya N."/>
            <person name="Nishio T."/>
            <person name="Okada M."/>
            <person name="Plessy C."/>
            <person name="Shibata K."/>
            <person name="Shiraki T."/>
            <person name="Suzuki S."/>
            <person name="Tagami M."/>
            <person name="Waki K."/>
            <person name="Watahiki A."/>
            <person name="Okamura-Oho Y."/>
            <person name="Suzuki H."/>
            <person name="Kawai J."/>
            <person name="Hayashizaki Y."/>
        </authorList>
    </citation>
    <scope>NUCLEOTIDE SEQUENCE [LARGE SCALE MRNA] (ISOFORMS 3; 4 AND 5)</scope>
    <scope>NUCLEOTIDE SEQUENCE [LARGE SCALE MRNA] OF 2724-3084 (ISOFORM 6)</scope>
    <source>
        <strain>C57BL/6J</strain>
        <strain>NOD</strain>
        <tissue>Bone marrow</tissue>
        <tissue>Hypothalamus</tissue>
        <tissue>Oviduct</tissue>
        <tissue>Spinal cord</tissue>
    </source>
</reference>
<reference key="3">
    <citation type="journal article" date="2009" name="PLoS Biol.">
        <title>Lineage-specific biology revealed by a finished genome assembly of the mouse.</title>
        <authorList>
            <person name="Church D.M."/>
            <person name="Goodstadt L."/>
            <person name="Hillier L.W."/>
            <person name="Zody M.C."/>
            <person name="Goldstein S."/>
            <person name="She X."/>
            <person name="Bult C.J."/>
            <person name="Agarwala R."/>
            <person name="Cherry J.L."/>
            <person name="DiCuccio M."/>
            <person name="Hlavina W."/>
            <person name="Kapustin Y."/>
            <person name="Meric P."/>
            <person name="Maglott D."/>
            <person name="Birtle Z."/>
            <person name="Marques A.C."/>
            <person name="Graves T."/>
            <person name="Zhou S."/>
            <person name="Teague B."/>
            <person name="Potamousis K."/>
            <person name="Churas C."/>
            <person name="Place M."/>
            <person name="Herschleb J."/>
            <person name="Runnheim R."/>
            <person name="Forrest D."/>
            <person name="Amos-Landgraf J."/>
            <person name="Schwartz D.C."/>
            <person name="Cheng Z."/>
            <person name="Lindblad-Toh K."/>
            <person name="Eichler E.E."/>
            <person name="Ponting C.P."/>
        </authorList>
    </citation>
    <scope>NUCLEOTIDE SEQUENCE [LARGE SCALE GENOMIC DNA]</scope>
    <source>
        <strain>C57BL/6J</strain>
    </source>
</reference>
<reference key="4">
    <citation type="journal article" date="2004" name="Genome Res.">
        <title>The status, quality, and expansion of the NIH full-length cDNA project: the Mammalian Gene Collection (MGC).</title>
        <authorList>
            <consortium name="The MGC Project Team"/>
        </authorList>
    </citation>
    <scope>NUCLEOTIDE SEQUENCE [LARGE SCALE MRNA] (ISOFORM 4)</scope>
    <scope>NUCLEOTIDE SEQUENCE [LARGE SCALE MRNA] OF 1874-3084 (ISOFORM 1)</scope>
    <source>
        <strain>C57BL/6J</strain>
        <tissue>Brain</tissue>
        <tissue>Embryonic stem cell</tissue>
    </source>
</reference>
<reference key="5">
    <citation type="journal article" date="2006" name="Oncogene">
        <title>Increased expression of proapoptotic BMCC1, a novel gene with the BNIP2 and Cdc42GAP homology (BCH) domain, is associated with favorable prognosis in human neuroblastomas.</title>
        <authorList>
            <person name="Machida T."/>
            <person name="Fujita T."/>
            <person name="Ooo M.L."/>
            <person name="Ohira M."/>
            <person name="Isogai E."/>
            <person name="Mihara M."/>
            <person name="Hirato J."/>
            <person name="Tomotsune D."/>
            <person name="Hirata T."/>
            <person name="Fujimori M."/>
            <person name="Adachi W."/>
            <person name="Nakagawara A."/>
        </authorList>
    </citation>
    <scope>INDUCTION</scope>
    <scope>DEVELOPMENTAL STAGE</scope>
</reference>
<reference key="6">
    <citation type="journal article" date="2010" name="Cell">
        <title>A tissue-specific atlas of mouse protein phosphorylation and expression.</title>
        <authorList>
            <person name="Huttlin E.L."/>
            <person name="Jedrychowski M.P."/>
            <person name="Elias J.E."/>
            <person name="Goswami T."/>
            <person name="Rad R."/>
            <person name="Beausoleil S.A."/>
            <person name="Villen J."/>
            <person name="Haas W."/>
            <person name="Sowa M.E."/>
            <person name="Gygi S.P."/>
        </authorList>
    </citation>
    <scope>IDENTIFICATION BY MASS SPECTROMETRY [LARGE SCALE ANALYSIS]</scope>
    <source>
        <tissue>Brain</tissue>
    </source>
</reference>
<keyword id="KW-0007">Acetylation</keyword>
<keyword id="KW-0025">Alternative splicing</keyword>
<keyword id="KW-0053">Apoptosis</keyword>
<keyword id="KW-0963">Cytoplasm</keyword>
<keyword id="KW-1185">Reference proteome</keyword>
<comment type="function">
    <text evidence="1">May play an important role in regulating differentiation, survival and aggressiveness of the tumor cells.</text>
</comment>
<comment type="subcellular location">
    <subcellularLocation>
        <location evidence="1">Cytoplasm</location>
    </subcellularLocation>
</comment>
<comment type="alternative products">
    <event type="alternative splicing"/>
    <isoform>
        <id>Q52KR3-1</id>
        <name>1</name>
        <sequence type="displayed"/>
    </isoform>
    <isoform>
        <id>Q52KR3-2</id>
        <name>2</name>
        <sequence type="described" ref="VSP_022905 VSP_022906 VSP_022908"/>
    </isoform>
    <isoform>
        <id>Q52KR3-3</id>
        <name>3</name>
        <sequence type="described" ref="VSP_022905 VSP_022908"/>
    </isoform>
    <isoform>
        <id>Q52KR3-4</id>
        <name>4</name>
        <sequence type="described" ref="VSP_022905 VSP_039358"/>
    </isoform>
    <isoform>
        <id>Q52KR3-5</id>
        <name>5</name>
        <sequence type="described" ref="VSP_039356 VSP_039357"/>
    </isoform>
    <isoform>
        <id>Q52KR3-6</id>
        <name>6</name>
        <sequence type="described" ref="VSP_039358"/>
    </isoform>
</comment>
<comment type="developmental stage">
    <text evidence="5">In the embryo specifically expressed in neural tube and neural crest-related tissues. At 10.5 dpc, highly expressed in neural tube and pharyngeal arches which are derived from neural crest. Expression is more restricted in the later stages of development. At 12.5 dpc, expressed in spinal cord, hindbrain, midbrain, forebrain and dorsal root ganglia (DRG). Although the expression at 14.5 dpc is similar to those in 12.5 dpc, the regions expressing in hindbrain, spinal cord and forebrain at 14.5 dpc are more dorsally restricted than at 12.5 dpc.</text>
</comment>
<comment type="induction">
    <text evidence="5">Down-regulated after nerve growth factor (NGF)-induced differentiation, and up-regulated during the NGF-depletion-induced apoptosis.</text>
</comment>
<comment type="similarity">
    <text evidence="9">Belongs to the PPase class C family. Prune subfamily.</text>
</comment>
<comment type="sequence caution" evidence="9">
    <conflict type="erroneous initiation">
        <sequence resource="EMBL-CDS" id="AAH94224"/>
    </conflict>
    <text>Truncated N-terminus.</text>
</comment>
<comment type="sequence caution" evidence="9">
    <conflict type="erroneous initiation">
        <sequence resource="EMBL-CDS" id="BAD32217"/>
    </conflict>
    <text>Extended N-terminus.</text>
</comment>
<comment type="sequence caution" evidence="9">
    <conflict type="erroneous initiation">
        <sequence resource="EMBL-CDS" id="BAE41506"/>
    </conflict>
    <text>Truncated N-terminus.</text>
</comment>
<feature type="chain" id="PRO_0000274881" description="Protein prune homolog 2">
    <location>
        <begin position="1"/>
        <end position="3084"/>
    </location>
</feature>
<feature type="domain" description="CRAL-TRIO" evidence="3">
    <location>
        <begin position="2879"/>
        <end position="3040"/>
    </location>
</feature>
<feature type="region of interest" description="Disordered" evidence="4">
    <location>
        <begin position="394"/>
        <end position="417"/>
    </location>
</feature>
<feature type="region of interest" description="Disordered" evidence="4">
    <location>
        <begin position="430"/>
        <end position="465"/>
    </location>
</feature>
<feature type="region of interest" description="Disordered" evidence="4">
    <location>
        <begin position="500"/>
        <end position="536"/>
    </location>
</feature>
<feature type="region of interest" description="Disordered" evidence="4">
    <location>
        <begin position="672"/>
        <end position="733"/>
    </location>
</feature>
<feature type="region of interest" description="Disordered" evidence="4">
    <location>
        <begin position="811"/>
        <end position="837"/>
    </location>
</feature>
<feature type="region of interest" description="Disordered" evidence="4">
    <location>
        <begin position="861"/>
        <end position="907"/>
    </location>
</feature>
<feature type="region of interest" description="Disordered" evidence="4">
    <location>
        <begin position="947"/>
        <end position="1080"/>
    </location>
</feature>
<feature type="region of interest" description="Disordered" evidence="4">
    <location>
        <begin position="1224"/>
        <end position="1316"/>
    </location>
</feature>
<feature type="region of interest" description="Disordered" evidence="4">
    <location>
        <begin position="1338"/>
        <end position="1395"/>
    </location>
</feature>
<feature type="region of interest" description="Disordered" evidence="4">
    <location>
        <begin position="1502"/>
        <end position="1543"/>
    </location>
</feature>
<feature type="region of interest" description="Disordered" evidence="4">
    <location>
        <begin position="1600"/>
        <end position="1652"/>
    </location>
</feature>
<feature type="region of interest" description="Disordered" evidence="4">
    <location>
        <begin position="1776"/>
        <end position="1799"/>
    </location>
</feature>
<feature type="region of interest" description="Disordered" evidence="4">
    <location>
        <begin position="1836"/>
        <end position="1886"/>
    </location>
</feature>
<feature type="region of interest" description="Disordered" evidence="4">
    <location>
        <begin position="1961"/>
        <end position="1980"/>
    </location>
</feature>
<feature type="region of interest" description="Disordered" evidence="4">
    <location>
        <begin position="2071"/>
        <end position="2196"/>
    </location>
</feature>
<feature type="region of interest" description="Disordered" evidence="4">
    <location>
        <begin position="2410"/>
        <end position="2782"/>
    </location>
</feature>
<feature type="region of interest" description="Disordered" evidence="4">
    <location>
        <begin position="2797"/>
        <end position="2816"/>
    </location>
</feature>
<feature type="region of interest" description="Disordered" evidence="4">
    <location>
        <begin position="2825"/>
        <end position="2859"/>
    </location>
</feature>
<feature type="short sequence motif" description="DHH motif" evidence="1">
    <location>
        <begin position="109"/>
        <end position="111"/>
    </location>
</feature>
<feature type="compositionally biased region" description="Polar residues" evidence="4">
    <location>
        <begin position="501"/>
        <end position="511"/>
    </location>
</feature>
<feature type="compositionally biased region" description="Basic and acidic residues" evidence="4">
    <location>
        <begin position="682"/>
        <end position="696"/>
    </location>
</feature>
<feature type="compositionally biased region" description="Basic and acidic residues" evidence="4">
    <location>
        <begin position="723"/>
        <end position="733"/>
    </location>
</feature>
<feature type="compositionally biased region" description="Polar residues" evidence="4">
    <location>
        <begin position="811"/>
        <end position="828"/>
    </location>
</feature>
<feature type="compositionally biased region" description="Polar residues" evidence="4">
    <location>
        <begin position="865"/>
        <end position="891"/>
    </location>
</feature>
<feature type="compositionally biased region" description="Low complexity" evidence="4">
    <location>
        <begin position="962"/>
        <end position="975"/>
    </location>
</feature>
<feature type="compositionally biased region" description="Basic and acidic residues" evidence="4">
    <location>
        <begin position="977"/>
        <end position="999"/>
    </location>
</feature>
<feature type="compositionally biased region" description="Polar residues" evidence="4">
    <location>
        <begin position="1009"/>
        <end position="1019"/>
    </location>
</feature>
<feature type="compositionally biased region" description="Basic and acidic residues" evidence="4">
    <location>
        <begin position="1034"/>
        <end position="1063"/>
    </location>
</feature>
<feature type="compositionally biased region" description="Low complexity" evidence="4">
    <location>
        <begin position="1071"/>
        <end position="1080"/>
    </location>
</feature>
<feature type="compositionally biased region" description="Basic and acidic residues" evidence="4">
    <location>
        <begin position="1248"/>
        <end position="1261"/>
    </location>
</feature>
<feature type="compositionally biased region" description="Polar residues" evidence="4">
    <location>
        <begin position="1265"/>
        <end position="1294"/>
    </location>
</feature>
<feature type="compositionally biased region" description="Basic and acidic residues" evidence="4">
    <location>
        <begin position="1350"/>
        <end position="1366"/>
    </location>
</feature>
<feature type="compositionally biased region" description="Low complexity" evidence="4">
    <location>
        <begin position="1368"/>
        <end position="1378"/>
    </location>
</feature>
<feature type="compositionally biased region" description="Polar residues" evidence="4">
    <location>
        <begin position="1779"/>
        <end position="1792"/>
    </location>
</feature>
<feature type="compositionally biased region" description="Polar residues" evidence="4">
    <location>
        <begin position="1854"/>
        <end position="1869"/>
    </location>
</feature>
<feature type="compositionally biased region" description="Polar residues" evidence="4">
    <location>
        <begin position="1965"/>
        <end position="1980"/>
    </location>
</feature>
<feature type="compositionally biased region" description="Basic and acidic residues" evidence="4">
    <location>
        <begin position="2089"/>
        <end position="2103"/>
    </location>
</feature>
<feature type="compositionally biased region" description="Low complexity" evidence="4">
    <location>
        <begin position="2162"/>
        <end position="2174"/>
    </location>
</feature>
<feature type="compositionally biased region" description="Basic and acidic residues" evidence="4">
    <location>
        <begin position="2416"/>
        <end position="2428"/>
    </location>
</feature>
<feature type="compositionally biased region" description="Basic and acidic residues" evidence="4">
    <location>
        <begin position="2506"/>
        <end position="2525"/>
    </location>
</feature>
<feature type="compositionally biased region" description="Basic and acidic residues" evidence="4">
    <location>
        <begin position="2535"/>
        <end position="2553"/>
    </location>
</feature>
<feature type="compositionally biased region" description="Polar residues" evidence="4">
    <location>
        <begin position="2569"/>
        <end position="2584"/>
    </location>
</feature>
<feature type="compositionally biased region" description="Low complexity" evidence="4">
    <location>
        <begin position="2595"/>
        <end position="2606"/>
    </location>
</feature>
<feature type="compositionally biased region" description="Polar residues" evidence="4">
    <location>
        <begin position="2607"/>
        <end position="2617"/>
    </location>
</feature>
<feature type="compositionally biased region" description="Basic and acidic residues" evidence="4">
    <location>
        <begin position="2653"/>
        <end position="2664"/>
    </location>
</feature>
<feature type="compositionally biased region" description="Acidic residues" evidence="4">
    <location>
        <begin position="2806"/>
        <end position="2816"/>
    </location>
</feature>
<feature type="compositionally biased region" description="Polar residues" evidence="4">
    <location>
        <begin position="2840"/>
        <end position="2849"/>
    </location>
</feature>
<feature type="modified residue" description="N-acetylmethionine" evidence="2">
    <location>
        <position position="1"/>
    </location>
</feature>
<feature type="splice variant" id="VSP_022905" description="In isoform 2, isoform 3 and isoform 4." evidence="6 7 8">
    <location>
        <begin position="1"/>
        <end position="2749"/>
    </location>
</feature>
<feature type="splice variant" id="VSP_039356" description="In isoform 5." evidence="8">
    <original>DYLLHGNITSDL</original>
    <variation>VRKSGHSPLARG</variation>
    <location>
        <begin position="252"/>
        <end position="263"/>
    </location>
</feature>
<feature type="splice variant" id="VSP_039357" description="In isoform 5." evidence="8">
    <location>
        <begin position="264"/>
        <end position="3084"/>
    </location>
</feature>
<feature type="splice variant" id="VSP_022906" description="In isoform 2." evidence="6">
    <original>G</original>
    <variation>GGDS</variation>
    <location>
        <position position="2893"/>
    </location>
</feature>
<feature type="splice variant" id="VSP_039358" description="In isoform 4 and isoform 6." evidence="7 8">
    <original>KYDEEKSFKRSVRLDEELREASEAAKTSCLYNDPEMSSMEKD</original>
    <variation>N</variation>
    <location>
        <begin position="3034"/>
        <end position="3075"/>
    </location>
</feature>
<feature type="splice variant" id="VSP_022908" description="In isoform 2 and isoform 3." evidence="6 8">
    <location>
        <begin position="3035"/>
        <end position="3046"/>
    </location>
</feature>
<feature type="sequence conflict" description="In Ref. 2; BAB32192." evidence="9" ref="2">
    <original>E</original>
    <variation>K</variation>
    <location>
        <position position="132"/>
    </location>
</feature>
<feature type="sequence conflict" description="In Ref. 2; BAB32192." evidence="9" ref="2">
    <original>S</original>
    <variation>F</variation>
    <location>
        <position position="146"/>
    </location>
</feature>
<feature type="sequence conflict" description="In Ref. 2; BAB32192." evidence="9" ref="2">
    <original>A</original>
    <variation>V</variation>
    <location>
        <position position="156"/>
    </location>
</feature>
<feature type="sequence conflict" description="In Ref. 2; BAE41506." evidence="9" ref="2">
    <original>M</original>
    <variation>L</variation>
    <location>
        <position position="2724"/>
    </location>
</feature>
<feature type="sequence conflict" description="In Ref. 2; BAE41506." evidence="9" ref="2">
    <original>L</original>
    <variation>P</variation>
    <location>
        <position position="2740"/>
    </location>
</feature>
<feature type="sequence conflict" description="In Ref. 4; AAH95978." evidence="9" ref="4">
    <original>A</original>
    <variation>V</variation>
    <location>
        <position position="2939"/>
    </location>
</feature>